<reference key="1">
    <citation type="journal article" date="2011" name="J. Bacteriol.">
        <title>Comparative genomics of 28 Salmonella enterica isolates: evidence for CRISPR-mediated adaptive sublineage evolution.</title>
        <authorList>
            <person name="Fricke W.F."/>
            <person name="Mammel M.K."/>
            <person name="McDermott P.F."/>
            <person name="Tartera C."/>
            <person name="White D.G."/>
            <person name="Leclerc J.E."/>
            <person name="Ravel J."/>
            <person name="Cebula T.A."/>
        </authorList>
    </citation>
    <scope>NUCLEOTIDE SEQUENCE [LARGE SCALE GENOMIC DNA]</scope>
    <source>
        <strain>CVM19633</strain>
    </source>
</reference>
<accession>B4TMG7</accession>
<keyword id="KW-0963">Cytoplasm</keyword>
<keyword id="KW-0350">Heme biosynthesis</keyword>
<keyword id="KW-0408">Iron</keyword>
<keyword id="KW-0456">Lyase</keyword>
<keyword id="KW-0479">Metal-binding</keyword>
<keyword id="KW-0627">Porphyrin biosynthesis</keyword>
<dbReference type="EC" id="4.98.1.1" evidence="1"/>
<dbReference type="EMBL" id="CP001127">
    <property type="protein sequence ID" value="ACF91800.1"/>
    <property type="molecule type" value="Genomic_DNA"/>
</dbReference>
<dbReference type="RefSeq" id="WP_001250131.1">
    <property type="nucleotide sequence ID" value="NC_011094.1"/>
</dbReference>
<dbReference type="SMR" id="B4TMG7"/>
<dbReference type="KEGG" id="sew:SeSA_A0551"/>
<dbReference type="HOGENOM" id="CLU_018884_0_0_6"/>
<dbReference type="UniPathway" id="UPA00252">
    <property type="reaction ID" value="UER00325"/>
</dbReference>
<dbReference type="Proteomes" id="UP000001865">
    <property type="component" value="Chromosome"/>
</dbReference>
<dbReference type="GO" id="GO:0005737">
    <property type="term" value="C:cytoplasm"/>
    <property type="evidence" value="ECO:0007669"/>
    <property type="project" value="UniProtKB-SubCell"/>
</dbReference>
<dbReference type="GO" id="GO:0004325">
    <property type="term" value="F:ferrochelatase activity"/>
    <property type="evidence" value="ECO:0007669"/>
    <property type="project" value="UniProtKB-UniRule"/>
</dbReference>
<dbReference type="GO" id="GO:0046872">
    <property type="term" value="F:metal ion binding"/>
    <property type="evidence" value="ECO:0007669"/>
    <property type="project" value="UniProtKB-KW"/>
</dbReference>
<dbReference type="GO" id="GO:0006783">
    <property type="term" value="P:heme biosynthetic process"/>
    <property type="evidence" value="ECO:0007669"/>
    <property type="project" value="UniProtKB-UniRule"/>
</dbReference>
<dbReference type="CDD" id="cd00419">
    <property type="entry name" value="Ferrochelatase_C"/>
    <property type="match status" value="1"/>
</dbReference>
<dbReference type="CDD" id="cd03411">
    <property type="entry name" value="Ferrochelatase_N"/>
    <property type="match status" value="1"/>
</dbReference>
<dbReference type="FunFam" id="3.40.50.1400:FF:000004">
    <property type="entry name" value="Ferrochelatase"/>
    <property type="match status" value="1"/>
</dbReference>
<dbReference type="Gene3D" id="3.40.50.1400">
    <property type="match status" value="2"/>
</dbReference>
<dbReference type="HAMAP" id="MF_00323">
    <property type="entry name" value="Ferrochelatase"/>
    <property type="match status" value="1"/>
</dbReference>
<dbReference type="InterPro" id="IPR001015">
    <property type="entry name" value="Ferrochelatase"/>
</dbReference>
<dbReference type="InterPro" id="IPR019772">
    <property type="entry name" value="Ferrochelatase_AS"/>
</dbReference>
<dbReference type="InterPro" id="IPR033644">
    <property type="entry name" value="Ferrochelatase_C"/>
</dbReference>
<dbReference type="InterPro" id="IPR033659">
    <property type="entry name" value="Ferrochelatase_N"/>
</dbReference>
<dbReference type="NCBIfam" id="TIGR00109">
    <property type="entry name" value="hemH"/>
    <property type="match status" value="1"/>
</dbReference>
<dbReference type="PANTHER" id="PTHR11108">
    <property type="entry name" value="FERROCHELATASE"/>
    <property type="match status" value="1"/>
</dbReference>
<dbReference type="PANTHER" id="PTHR11108:SF1">
    <property type="entry name" value="FERROCHELATASE, MITOCHONDRIAL"/>
    <property type="match status" value="1"/>
</dbReference>
<dbReference type="Pfam" id="PF00762">
    <property type="entry name" value="Ferrochelatase"/>
    <property type="match status" value="1"/>
</dbReference>
<dbReference type="SUPFAM" id="SSF53800">
    <property type="entry name" value="Chelatase"/>
    <property type="match status" value="1"/>
</dbReference>
<dbReference type="PROSITE" id="PS00534">
    <property type="entry name" value="FERROCHELATASE"/>
    <property type="match status" value="1"/>
</dbReference>
<sequence length="320" mass="35904">MRQTKTGILLANLGTPDAPTSEAVKRYLKQFLSDRRVVDTPRLLWWPLLRGVILPLRSPRVAKLYQSIWMDGGSPLMVYSREQQQALAARLPDTPVALGMSYGSPSLESAVDELLASDVDHIVVLPLYPQYSCSTVGAVWDELGRILARKRRIPGISFIRDYADDGAYIDALAKSARESFARHGEPDVLLLSYHGIPQRYADEGDDYPQRCRDTTRELVSALGLPPEKVMMTFQSRFGREPWLTPYTDETLKMLGEKGTGHIQVMCPGFAADCLETLEEIAEQNREIFLEAGGKKYAYIPALNATPEHIDMMLKLTAPYR</sequence>
<evidence type="ECO:0000255" key="1">
    <source>
        <dbReference type="HAMAP-Rule" id="MF_00323"/>
    </source>
</evidence>
<feature type="chain" id="PRO_1000116080" description="Ferrochelatase">
    <location>
        <begin position="1"/>
        <end position="320"/>
    </location>
</feature>
<feature type="binding site" evidence="1">
    <location>
        <position position="194"/>
    </location>
    <ligand>
        <name>Fe cation</name>
        <dbReference type="ChEBI" id="CHEBI:24875"/>
    </ligand>
</feature>
<feature type="binding site" evidence="1">
    <location>
        <position position="275"/>
    </location>
    <ligand>
        <name>Fe cation</name>
        <dbReference type="ChEBI" id="CHEBI:24875"/>
    </ligand>
</feature>
<organism>
    <name type="scientific">Salmonella schwarzengrund (strain CVM19633)</name>
    <dbReference type="NCBI Taxonomy" id="439843"/>
    <lineage>
        <taxon>Bacteria</taxon>
        <taxon>Pseudomonadati</taxon>
        <taxon>Pseudomonadota</taxon>
        <taxon>Gammaproteobacteria</taxon>
        <taxon>Enterobacterales</taxon>
        <taxon>Enterobacteriaceae</taxon>
        <taxon>Salmonella</taxon>
    </lineage>
</organism>
<proteinExistence type="inferred from homology"/>
<gene>
    <name evidence="1" type="primary">hemH</name>
    <name type="ordered locus">SeSA_A0551</name>
</gene>
<comment type="function">
    <text evidence="1">Catalyzes the ferrous insertion into protoporphyrin IX.</text>
</comment>
<comment type="catalytic activity">
    <reaction evidence="1">
        <text>heme b + 2 H(+) = protoporphyrin IX + Fe(2+)</text>
        <dbReference type="Rhea" id="RHEA:22584"/>
        <dbReference type="ChEBI" id="CHEBI:15378"/>
        <dbReference type="ChEBI" id="CHEBI:29033"/>
        <dbReference type="ChEBI" id="CHEBI:57306"/>
        <dbReference type="ChEBI" id="CHEBI:60344"/>
        <dbReference type="EC" id="4.98.1.1"/>
    </reaction>
</comment>
<comment type="pathway">
    <text evidence="1">Porphyrin-containing compound metabolism; protoheme biosynthesis; protoheme from protoporphyrin-IX: step 1/1.</text>
</comment>
<comment type="subunit">
    <text evidence="1">Monomer.</text>
</comment>
<comment type="subcellular location">
    <subcellularLocation>
        <location evidence="1">Cytoplasm</location>
    </subcellularLocation>
</comment>
<comment type="similarity">
    <text evidence="1">Belongs to the ferrochelatase family.</text>
</comment>
<name>HEMH_SALSV</name>
<protein>
    <recommendedName>
        <fullName evidence="1">Ferrochelatase</fullName>
        <ecNumber evidence="1">4.98.1.1</ecNumber>
    </recommendedName>
    <alternativeName>
        <fullName evidence="1">Heme synthase</fullName>
    </alternativeName>
    <alternativeName>
        <fullName evidence="1">Protoheme ferro-lyase</fullName>
    </alternativeName>
</protein>